<name>SSRP_BACC1</name>
<sequence>MPKGSGKVIAQNKKAFHDYFIEETYEAGLVLQGTEIKSIRAGRVNLKDAFARVHNGEVWVHNMHISTYEQGNRFNHDPLRTRKLLLHKKEIDKLAGAAKETGYALVPLKIYLKNGFAKMALGLAKGKKQYDKRHDLKEKEAKREIARAFRDRQKM</sequence>
<protein>
    <recommendedName>
        <fullName evidence="1">SsrA-binding protein</fullName>
    </recommendedName>
    <alternativeName>
        <fullName evidence="1">Small protein B</fullName>
    </alternativeName>
</protein>
<organism>
    <name type="scientific">Bacillus cereus (strain ATCC 10987 / NRS 248)</name>
    <dbReference type="NCBI Taxonomy" id="222523"/>
    <lineage>
        <taxon>Bacteria</taxon>
        <taxon>Bacillati</taxon>
        <taxon>Bacillota</taxon>
        <taxon>Bacilli</taxon>
        <taxon>Bacillales</taxon>
        <taxon>Bacillaceae</taxon>
        <taxon>Bacillus</taxon>
        <taxon>Bacillus cereus group</taxon>
    </lineage>
</organism>
<evidence type="ECO:0000255" key="1">
    <source>
        <dbReference type="HAMAP-Rule" id="MF_00023"/>
    </source>
</evidence>
<reference key="1">
    <citation type="journal article" date="2004" name="Nucleic Acids Res.">
        <title>The genome sequence of Bacillus cereus ATCC 10987 reveals metabolic adaptations and a large plasmid related to Bacillus anthracis pXO1.</title>
        <authorList>
            <person name="Rasko D.A."/>
            <person name="Ravel J."/>
            <person name="Oekstad O.A."/>
            <person name="Helgason E."/>
            <person name="Cer R.Z."/>
            <person name="Jiang L."/>
            <person name="Shores K.A."/>
            <person name="Fouts D.E."/>
            <person name="Tourasse N.J."/>
            <person name="Angiuoli S.V."/>
            <person name="Kolonay J.F."/>
            <person name="Nelson W.C."/>
            <person name="Kolstoe A.-B."/>
            <person name="Fraser C.M."/>
            <person name="Read T.D."/>
        </authorList>
    </citation>
    <scope>NUCLEOTIDE SEQUENCE [LARGE SCALE GENOMIC DNA]</scope>
    <source>
        <strain>ATCC 10987 / NRS 248</strain>
    </source>
</reference>
<accession>Q72XZ2</accession>
<dbReference type="EMBL" id="AE017194">
    <property type="protein sequence ID" value="AAS44132.1"/>
    <property type="molecule type" value="Genomic_DNA"/>
</dbReference>
<dbReference type="SMR" id="Q72XZ2"/>
<dbReference type="KEGG" id="bca:BCE_5231"/>
<dbReference type="HOGENOM" id="CLU_108953_0_0_9"/>
<dbReference type="Proteomes" id="UP000002527">
    <property type="component" value="Chromosome"/>
</dbReference>
<dbReference type="GO" id="GO:0005829">
    <property type="term" value="C:cytosol"/>
    <property type="evidence" value="ECO:0007669"/>
    <property type="project" value="TreeGrafter"/>
</dbReference>
<dbReference type="GO" id="GO:0003723">
    <property type="term" value="F:RNA binding"/>
    <property type="evidence" value="ECO:0007669"/>
    <property type="project" value="UniProtKB-UniRule"/>
</dbReference>
<dbReference type="GO" id="GO:0070929">
    <property type="term" value="P:trans-translation"/>
    <property type="evidence" value="ECO:0007669"/>
    <property type="project" value="UniProtKB-UniRule"/>
</dbReference>
<dbReference type="CDD" id="cd09294">
    <property type="entry name" value="SmpB"/>
    <property type="match status" value="1"/>
</dbReference>
<dbReference type="Gene3D" id="2.40.280.10">
    <property type="match status" value="1"/>
</dbReference>
<dbReference type="HAMAP" id="MF_00023">
    <property type="entry name" value="SmpB"/>
    <property type="match status" value="1"/>
</dbReference>
<dbReference type="InterPro" id="IPR023620">
    <property type="entry name" value="SmpB"/>
</dbReference>
<dbReference type="InterPro" id="IPR000037">
    <property type="entry name" value="SsrA-bd_prot"/>
</dbReference>
<dbReference type="InterPro" id="IPR020081">
    <property type="entry name" value="SsrA-bd_prot_CS"/>
</dbReference>
<dbReference type="NCBIfam" id="NF003843">
    <property type="entry name" value="PRK05422.1"/>
    <property type="match status" value="1"/>
</dbReference>
<dbReference type="NCBIfam" id="TIGR00086">
    <property type="entry name" value="smpB"/>
    <property type="match status" value="1"/>
</dbReference>
<dbReference type="PANTHER" id="PTHR30308:SF2">
    <property type="entry name" value="SSRA-BINDING PROTEIN"/>
    <property type="match status" value="1"/>
</dbReference>
<dbReference type="PANTHER" id="PTHR30308">
    <property type="entry name" value="TMRNA-BINDING COMPONENT OF TRANS-TRANSLATION TAGGING COMPLEX"/>
    <property type="match status" value="1"/>
</dbReference>
<dbReference type="Pfam" id="PF01668">
    <property type="entry name" value="SmpB"/>
    <property type="match status" value="1"/>
</dbReference>
<dbReference type="SUPFAM" id="SSF74982">
    <property type="entry name" value="Small protein B (SmpB)"/>
    <property type="match status" value="1"/>
</dbReference>
<dbReference type="PROSITE" id="PS01317">
    <property type="entry name" value="SSRP"/>
    <property type="match status" value="1"/>
</dbReference>
<feature type="chain" id="PRO_0000102898" description="SsrA-binding protein">
    <location>
        <begin position="1"/>
        <end position="155"/>
    </location>
</feature>
<comment type="function">
    <text evidence="1">Required for rescue of stalled ribosomes mediated by trans-translation. Binds to transfer-messenger RNA (tmRNA), required for stable association of tmRNA with ribosomes. tmRNA and SmpB together mimic tRNA shape, replacing the anticodon stem-loop with SmpB. tmRNA is encoded by the ssrA gene; the 2 termini fold to resemble tRNA(Ala) and it encodes a 'tag peptide', a short internal open reading frame. During trans-translation Ala-aminoacylated tmRNA acts like a tRNA, entering the A-site of stalled ribosomes, displacing the stalled mRNA. The ribosome then switches to translate the ORF on the tmRNA; the nascent peptide is terminated with the 'tag peptide' encoded by the tmRNA and targeted for degradation. The ribosome is freed to recommence translation, which seems to be the essential function of trans-translation.</text>
</comment>
<comment type="subcellular location">
    <subcellularLocation>
        <location evidence="1">Cytoplasm</location>
    </subcellularLocation>
    <text evidence="1">The tmRNA-SmpB complex associates with stalled 70S ribosomes.</text>
</comment>
<comment type="similarity">
    <text evidence="1">Belongs to the SmpB family.</text>
</comment>
<gene>
    <name evidence="1" type="primary">smpB</name>
    <name type="ordered locus">BCE_5231</name>
</gene>
<keyword id="KW-0963">Cytoplasm</keyword>
<keyword id="KW-0694">RNA-binding</keyword>
<proteinExistence type="inferred from homology"/>